<sequence length="200" mass="21565">MDADGLPIVGSGVDLTKVPAIQQRRIVAFLNQFIVHTVRFLNRFSTVCEEKLSTVSLRIQQIETTLSILEAKLASIPGLEEVTVDGVRAPAETNGPAADTSRATAPPAEASQQTQAAPQEPKTEAPAENIMTVAKDPRYARYLKMVQVGVPVMAIKNKMMMEGLDPNLLDTPDAAVPDASKKRLEEQDDDSSGSESSFSD</sequence>
<keyword id="KW-0175">Coiled coil</keyword>
<keyword id="KW-1185">Reference proteome</keyword>
<evidence type="ECO:0000250" key="1">
    <source>
        <dbReference type="UniProtKB" id="Q9Y3C0"/>
    </source>
</evidence>
<evidence type="ECO:0000255" key="2"/>
<evidence type="ECO:0000256" key="3">
    <source>
        <dbReference type="SAM" id="MobiDB-lite"/>
    </source>
</evidence>
<evidence type="ECO:0000305" key="4"/>
<dbReference type="EMBL" id="BX890572">
    <property type="protein sequence ID" value="CAI11846.1"/>
    <property type="molecule type" value="Genomic_DNA"/>
</dbReference>
<dbReference type="EMBL" id="BC045438">
    <property type="protein sequence ID" value="AAH45438.1"/>
    <property type="molecule type" value="mRNA"/>
</dbReference>
<dbReference type="RefSeq" id="NP_956467.1">
    <property type="nucleotide sequence ID" value="NM_200173.1"/>
</dbReference>
<dbReference type="SMR" id="Q5RGJ6"/>
<dbReference type="FunCoup" id="Q5RGJ6">
    <property type="interactions" value="850"/>
</dbReference>
<dbReference type="STRING" id="7955.ENSDARP00000066998"/>
<dbReference type="PaxDb" id="7955-ENSDARP00000066998"/>
<dbReference type="Ensembl" id="ENSDART00000066999">
    <property type="protein sequence ID" value="ENSDARP00000066998"/>
    <property type="gene ID" value="ENSDARG00000045563"/>
</dbReference>
<dbReference type="GeneID" id="393142"/>
<dbReference type="KEGG" id="dre:393142"/>
<dbReference type="AGR" id="ZFIN:ZDB-GENE-040426-783"/>
<dbReference type="CTD" id="51019"/>
<dbReference type="ZFIN" id="ZDB-GENE-040426-783">
    <property type="gene designation" value="washc3"/>
</dbReference>
<dbReference type="eggNOG" id="KOG4496">
    <property type="taxonomic scope" value="Eukaryota"/>
</dbReference>
<dbReference type="HOGENOM" id="CLU_117940_0_0_1"/>
<dbReference type="InParanoid" id="Q5RGJ6"/>
<dbReference type="OMA" id="GCETKFV"/>
<dbReference type="OrthoDB" id="268027at2759"/>
<dbReference type="PhylomeDB" id="Q5RGJ6"/>
<dbReference type="TreeFam" id="TF318955"/>
<dbReference type="PRO" id="PR:Q5RGJ6"/>
<dbReference type="Proteomes" id="UP000000437">
    <property type="component" value="Chromosome 4"/>
</dbReference>
<dbReference type="Bgee" id="ENSDARG00000045563">
    <property type="expression patterns" value="Expressed in intestine and 28 other cell types or tissues"/>
</dbReference>
<dbReference type="GO" id="GO:0071203">
    <property type="term" value="C:WASH complex"/>
    <property type="evidence" value="ECO:0000250"/>
    <property type="project" value="UniProtKB"/>
</dbReference>
<dbReference type="GO" id="GO:0030041">
    <property type="term" value="P:actin filament polymerization"/>
    <property type="evidence" value="ECO:0000318"/>
    <property type="project" value="GO_Central"/>
</dbReference>
<dbReference type="GO" id="GO:0006887">
    <property type="term" value="P:exocytosis"/>
    <property type="evidence" value="ECO:0000318"/>
    <property type="project" value="GO_Central"/>
</dbReference>
<dbReference type="FunFam" id="1.20.5.110:FF:000025">
    <property type="entry name" value="Putative WASH complex subunit CCDC53"/>
    <property type="match status" value="1"/>
</dbReference>
<dbReference type="Gene3D" id="1.20.5.110">
    <property type="match status" value="1"/>
</dbReference>
<dbReference type="InterPro" id="IPR019309">
    <property type="entry name" value="WASHC3"/>
</dbReference>
<dbReference type="PANTHER" id="PTHR13015">
    <property type="entry name" value="PROTEIN AD-016-RELATED"/>
    <property type="match status" value="1"/>
</dbReference>
<dbReference type="PANTHER" id="PTHR13015:SF0">
    <property type="entry name" value="WASH COMPLEX SUBUNIT 3"/>
    <property type="match status" value="1"/>
</dbReference>
<dbReference type="Pfam" id="PF10152">
    <property type="entry name" value="CCDC53"/>
    <property type="match status" value="1"/>
</dbReference>
<reference key="1">
    <citation type="journal article" date="2013" name="Nature">
        <title>The zebrafish reference genome sequence and its relationship to the human genome.</title>
        <authorList>
            <person name="Howe K."/>
            <person name="Clark M.D."/>
            <person name="Torroja C.F."/>
            <person name="Torrance J."/>
            <person name="Berthelot C."/>
            <person name="Muffato M."/>
            <person name="Collins J.E."/>
            <person name="Humphray S."/>
            <person name="McLaren K."/>
            <person name="Matthews L."/>
            <person name="McLaren S."/>
            <person name="Sealy I."/>
            <person name="Caccamo M."/>
            <person name="Churcher C."/>
            <person name="Scott C."/>
            <person name="Barrett J.C."/>
            <person name="Koch R."/>
            <person name="Rauch G.J."/>
            <person name="White S."/>
            <person name="Chow W."/>
            <person name="Kilian B."/>
            <person name="Quintais L.T."/>
            <person name="Guerra-Assuncao J.A."/>
            <person name="Zhou Y."/>
            <person name="Gu Y."/>
            <person name="Yen J."/>
            <person name="Vogel J.H."/>
            <person name="Eyre T."/>
            <person name="Redmond S."/>
            <person name="Banerjee R."/>
            <person name="Chi J."/>
            <person name="Fu B."/>
            <person name="Langley E."/>
            <person name="Maguire S.F."/>
            <person name="Laird G.K."/>
            <person name="Lloyd D."/>
            <person name="Kenyon E."/>
            <person name="Donaldson S."/>
            <person name="Sehra H."/>
            <person name="Almeida-King J."/>
            <person name="Loveland J."/>
            <person name="Trevanion S."/>
            <person name="Jones M."/>
            <person name="Quail M."/>
            <person name="Willey D."/>
            <person name="Hunt A."/>
            <person name="Burton J."/>
            <person name="Sims S."/>
            <person name="McLay K."/>
            <person name="Plumb B."/>
            <person name="Davis J."/>
            <person name="Clee C."/>
            <person name="Oliver K."/>
            <person name="Clark R."/>
            <person name="Riddle C."/>
            <person name="Elliot D."/>
            <person name="Threadgold G."/>
            <person name="Harden G."/>
            <person name="Ware D."/>
            <person name="Begum S."/>
            <person name="Mortimore B."/>
            <person name="Kerry G."/>
            <person name="Heath P."/>
            <person name="Phillimore B."/>
            <person name="Tracey A."/>
            <person name="Corby N."/>
            <person name="Dunn M."/>
            <person name="Johnson C."/>
            <person name="Wood J."/>
            <person name="Clark S."/>
            <person name="Pelan S."/>
            <person name="Griffiths G."/>
            <person name="Smith M."/>
            <person name="Glithero R."/>
            <person name="Howden P."/>
            <person name="Barker N."/>
            <person name="Lloyd C."/>
            <person name="Stevens C."/>
            <person name="Harley J."/>
            <person name="Holt K."/>
            <person name="Panagiotidis G."/>
            <person name="Lovell J."/>
            <person name="Beasley H."/>
            <person name="Henderson C."/>
            <person name="Gordon D."/>
            <person name="Auger K."/>
            <person name="Wright D."/>
            <person name="Collins J."/>
            <person name="Raisen C."/>
            <person name="Dyer L."/>
            <person name="Leung K."/>
            <person name="Robertson L."/>
            <person name="Ambridge K."/>
            <person name="Leongamornlert D."/>
            <person name="McGuire S."/>
            <person name="Gilderthorp R."/>
            <person name="Griffiths C."/>
            <person name="Manthravadi D."/>
            <person name="Nichol S."/>
            <person name="Barker G."/>
            <person name="Whitehead S."/>
            <person name="Kay M."/>
            <person name="Brown J."/>
            <person name="Murnane C."/>
            <person name="Gray E."/>
            <person name="Humphries M."/>
            <person name="Sycamore N."/>
            <person name="Barker D."/>
            <person name="Saunders D."/>
            <person name="Wallis J."/>
            <person name="Babbage A."/>
            <person name="Hammond S."/>
            <person name="Mashreghi-Mohammadi M."/>
            <person name="Barr L."/>
            <person name="Martin S."/>
            <person name="Wray P."/>
            <person name="Ellington A."/>
            <person name="Matthews N."/>
            <person name="Ellwood M."/>
            <person name="Woodmansey R."/>
            <person name="Clark G."/>
            <person name="Cooper J."/>
            <person name="Tromans A."/>
            <person name="Grafham D."/>
            <person name="Skuce C."/>
            <person name="Pandian R."/>
            <person name="Andrews R."/>
            <person name="Harrison E."/>
            <person name="Kimberley A."/>
            <person name="Garnett J."/>
            <person name="Fosker N."/>
            <person name="Hall R."/>
            <person name="Garner P."/>
            <person name="Kelly D."/>
            <person name="Bird C."/>
            <person name="Palmer S."/>
            <person name="Gehring I."/>
            <person name="Berger A."/>
            <person name="Dooley C.M."/>
            <person name="Ersan-Urun Z."/>
            <person name="Eser C."/>
            <person name="Geiger H."/>
            <person name="Geisler M."/>
            <person name="Karotki L."/>
            <person name="Kirn A."/>
            <person name="Konantz J."/>
            <person name="Konantz M."/>
            <person name="Oberlander M."/>
            <person name="Rudolph-Geiger S."/>
            <person name="Teucke M."/>
            <person name="Lanz C."/>
            <person name="Raddatz G."/>
            <person name="Osoegawa K."/>
            <person name="Zhu B."/>
            <person name="Rapp A."/>
            <person name="Widaa S."/>
            <person name="Langford C."/>
            <person name="Yang F."/>
            <person name="Schuster S.C."/>
            <person name="Carter N.P."/>
            <person name="Harrow J."/>
            <person name="Ning Z."/>
            <person name="Herrero J."/>
            <person name="Searle S.M."/>
            <person name="Enright A."/>
            <person name="Geisler R."/>
            <person name="Plasterk R.H."/>
            <person name="Lee C."/>
            <person name="Westerfield M."/>
            <person name="de Jong P.J."/>
            <person name="Zon L.I."/>
            <person name="Postlethwait J.H."/>
            <person name="Nusslein-Volhard C."/>
            <person name="Hubbard T.J."/>
            <person name="Roest Crollius H."/>
            <person name="Rogers J."/>
            <person name="Stemple D.L."/>
        </authorList>
    </citation>
    <scope>NUCLEOTIDE SEQUENCE [LARGE SCALE GENOMIC DNA]</scope>
    <source>
        <strain>Tuebingen</strain>
    </source>
</reference>
<reference key="2">
    <citation type="submission" date="2003-01" db="EMBL/GenBank/DDBJ databases">
        <authorList>
            <consortium name="NIH - Zebrafish Gene Collection (ZGC) project"/>
        </authorList>
    </citation>
    <scope>NUCLEOTIDE SEQUENCE [LARGE SCALE MRNA]</scope>
    <source>
        <strain>AB</strain>
    </source>
</reference>
<comment type="subunit">
    <text evidence="1">Component of the WASH complex.</text>
</comment>
<comment type="similarity">
    <text evidence="4">Belongs to the CCDC53 family.</text>
</comment>
<organism>
    <name type="scientific">Danio rerio</name>
    <name type="common">Zebrafish</name>
    <name type="synonym">Brachydanio rerio</name>
    <dbReference type="NCBI Taxonomy" id="7955"/>
    <lineage>
        <taxon>Eukaryota</taxon>
        <taxon>Metazoa</taxon>
        <taxon>Chordata</taxon>
        <taxon>Craniata</taxon>
        <taxon>Vertebrata</taxon>
        <taxon>Euteleostomi</taxon>
        <taxon>Actinopterygii</taxon>
        <taxon>Neopterygii</taxon>
        <taxon>Teleostei</taxon>
        <taxon>Ostariophysi</taxon>
        <taxon>Cypriniformes</taxon>
        <taxon>Danionidae</taxon>
        <taxon>Danioninae</taxon>
        <taxon>Danio</taxon>
    </lineage>
</organism>
<gene>
    <name evidence="1" type="primary">washc3</name>
    <name type="synonym">ccdc53</name>
    <name type="ORF">Ch211-234f20.5</name>
    <name type="ORF">zgc:55718</name>
</gene>
<accession>Q5RGJ6</accession>
<accession>Q7ZVR9</accession>
<name>WASC3_DANRE</name>
<proteinExistence type="evidence at transcript level"/>
<feature type="chain" id="PRO_0000390955" description="WASH complex subunit 3">
    <location>
        <begin position="1"/>
        <end position="200"/>
    </location>
</feature>
<feature type="region of interest" description="Disordered" evidence="3">
    <location>
        <begin position="87"/>
        <end position="130"/>
    </location>
</feature>
<feature type="region of interest" description="Disordered" evidence="3">
    <location>
        <begin position="165"/>
        <end position="200"/>
    </location>
</feature>
<feature type="coiled-coil region" evidence="2">
    <location>
        <begin position="56"/>
        <end position="76"/>
    </location>
</feature>
<feature type="sequence conflict" description="In Ref. 2; AAH45438." evidence="4" ref="2">
    <original>D</original>
    <variation>E</variation>
    <location>
        <position position="85"/>
    </location>
</feature>
<protein>
    <recommendedName>
        <fullName evidence="1">WASH complex subunit 3</fullName>
    </recommendedName>
    <alternativeName>
        <fullName>Coiled-coil domain-containing protein 53</fullName>
    </alternativeName>
</protein>